<feature type="chain" id="PRO_0000154441" description="Anthranilate phosphoribosyltransferase">
    <location>
        <begin position="1"/>
        <end position="341"/>
    </location>
</feature>
<feature type="binding site" evidence="1">
    <location>
        <position position="82"/>
    </location>
    <ligand>
        <name>5-phospho-alpha-D-ribose 1-diphosphate</name>
        <dbReference type="ChEBI" id="CHEBI:58017"/>
    </ligand>
</feature>
<feature type="binding site" evidence="1">
    <location>
        <position position="82"/>
    </location>
    <ligand>
        <name>anthranilate</name>
        <dbReference type="ChEBI" id="CHEBI:16567"/>
        <label>1</label>
    </ligand>
</feature>
<feature type="binding site" evidence="1">
    <location>
        <begin position="85"/>
        <end position="86"/>
    </location>
    <ligand>
        <name>5-phospho-alpha-D-ribose 1-diphosphate</name>
        <dbReference type="ChEBI" id="CHEBI:58017"/>
    </ligand>
</feature>
<feature type="binding site" evidence="1">
    <location>
        <position position="90"/>
    </location>
    <ligand>
        <name>5-phospho-alpha-D-ribose 1-diphosphate</name>
        <dbReference type="ChEBI" id="CHEBI:58017"/>
    </ligand>
</feature>
<feature type="binding site" evidence="1">
    <location>
        <begin position="92"/>
        <end position="95"/>
    </location>
    <ligand>
        <name>5-phospho-alpha-D-ribose 1-diphosphate</name>
        <dbReference type="ChEBI" id="CHEBI:58017"/>
    </ligand>
</feature>
<feature type="binding site" evidence="1">
    <location>
        <position position="94"/>
    </location>
    <ligand>
        <name>Mg(2+)</name>
        <dbReference type="ChEBI" id="CHEBI:18420"/>
        <label>1</label>
    </ligand>
</feature>
<feature type="binding site" evidence="1">
    <location>
        <begin position="110"/>
        <end position="118"/>
    </location>
    <ligand>
        <name>5-phospho-alpha-D-ribose 1-diphosphate</name>
        <dbReference type="ChEBI" id="CHEBI:58017"/>
    </ligand>
</feature>
<feature type="binding site" evidence="1">
    <location>
        <position position="113"/>
    </location>
    <ligand>
        <name>anthranilate</name>
        <dbReference type="ChEBI" id="CHEBI:16567"/>
        <label>1</label>
    </ligand>
</feature>
<feature type="binding site" evidence="1">
    <location>
        <position position="122"/>
    </location>
    <ligand>
        <name>5-phospho-alpha-D-ribose 1-diphosphate</name>
        <dbReference type="ChEBI" id="CHEBI:58017"/>
    </ligand>
</feature>
<feature type="binding site" evidence="1">
    <location>
        <position position="168"/>
    </location>
    <ligand>
        <name>anthranilate</name>
        <dbReference type="ChEBI" id="CHEBI:16567"/>
        <label>2</label>
    </ligand>
</feature>
<feature type="binding site" evidence="1">
    <location>
        <position position="226"/>
    </location>
    <ligand>
        <name>Mg(2+)</name>
        <dbReference type="ChEBI" id="CHEBI:18420"/>
        <label>2</label>
    </ligand>
</feature>
<feature type="binding site" evidence="1">
    <location>
        <position position="227"/>
    </location>
    <ligand>
        <name>Mg(2+)</name>
        <dbReference type="ChEBI" id="CHEBI:18420"/>
        <label>1</label>
    </ligand>
</feature>
<feature type="binding site" evidence="1">
    <location>
        <position position="227"/>
    </location>
    <ligand>
        <name>Mg(2+)</name>
        <dbReference type="ChEBI" id="CHEBI:18420"/>
        <label>2</label>
    </ligand>
</feature>
<name>TRPD_CAUVC</name>
<keyword id="KW-0028">Amino-acid biosynthesis</keyword>
<keyword id="KW-0057">Aromatic amino acid biosynthesis</keyword>
<keyword id="KW-0328">Glycosyltransferase</keyword>
<keyword id="KW-0460">Magnesium</keyword>
<keyword id="KW-0479">Metal-binding</keyword>
<keyword id="KW-1185">Reference proteome</keyword>
<keyword id="KW-0808">Transferase</keyword>
<keyword id="KW-0822">Tryptophan biosynthesis</keyword>
<sequence length="341" mass="35217">MSDAFKPLLAKLADGQTLDDSDAELFFAACLRGEPTPAQVAAAVTAIRLRGETVGEIAACARAMRRAAIPLEHPYDVIDVCGTGGDGLHTLNISTAVGFVAAGGGLKVAKHGNRAITSKSGTADVLTALGVNIDATREQQRKALDEAGICFLFAQAHHGAMKHVSPIRQQLGFRTIFNLLGPLTNPAGAKRQVVGVSAPRFVEPIAKALGALGAERAWSVHGSGMDELTTTGETEVAEWRDGVVRLFKITPEAVGLPRAALADLTGGDPAFNAAALTRLFDGETGPYRDIVLLNAAAAFLVADKVETLVEGVALAAEAIDSGRAKAALAGLVAATNTEVPA</sequence>
<reference key="1">
    <citation type="journal article" date="2001" name="Proc. Natl. Acad. Sci. U.S.A.">
        <title>Complete genome sequence of Caulobacter crescentus.</title>
        <authorList>
            <person name="Nierman W.C."/>
            <person name="Feldblyum T.V."/>
            <person name="Laub M.T."/>
            <person name="Paulsen I.T."/>
            <person name="Nelson K.E."/>
            <person name="Eisen J.A."/>
            <person name="Heidelberg J.F."/>
            <person name="Alley M.R.K."/>
            <person name="Ohta N."/>
            <person name="Maddock J.R."/>
            <person name="Potocka I."/>
            <person name="Nelson W.C."/>
            <person name="Newton A."/>
            <person name="Stephens C."/>
            <person name="Phadke N.D."/>
            <person name="Ely B."/>
            <person name="DeBoy R.T."/>
            <person name="Dodson R.J."/>
            <person name="Durkin A.S."/>
            <person name="Gwinn M.L."/>
            <person name="Haft D.H."/>
            <person name="Kolonay J.F."/>
            <person name="Smit J."/>
            <person name="Craven M.B."/>
            <person name="Khouri H.M."/>
            <person name="Shetty J."/>
            <person name="Berry K.J."/>
            <person name="Utterback T.R."/>
            <person name="Tran K."/>
            <person name="Wolf A.M."/>
            <person name="Vamathevan J.J."/>
            <person name="Ermolaeva M.D."/>
            <person name="White O."/>
            <person name="Salzberg S.L."/>
            <person name="Venter J.C."/>
            <person name="Shapiro L."/>
            <person name="Fraser C.M."/>
        </authorList>
    </citation>
    <scope>NUCLEOTIDE SEQUENCE [LARGE SCALE GENOMIC DNA]</scope>
    <source>
        <strain>ATCC 19089 / CIP 103742 / CB 15</strain>
    </source>
</reference>
<dbReference type="EC" id="2.4.2.18" evidence="1"/>
<dbReference type="EMBL" id="AE005673">
    <property type="protein sequence ID" value="AAK23873.1"/>
    <property type="molecule type" value="Genomic_DNA"/>
</dbReference>
<dbReference type="PIR" id="E87484">
    <property type="entry name" value="E87484"/>
</dbReference>
<dbReference type="RefSeq" id="NP_420705.1">
    <property type="nucleotide sequence ID" value="NC_002696.2"/>
</dbReference>
<dbReference type="RefSeq" id="WP_010919764.1">
    <property type="nucleotide sequence ID" value="NC_002696.2"/>
</dbReference>
<dbReference type="SMR" id="Q9A728"/>
<dbReference type="STRING" id="190650.CC_1898"/>
<dbReference type="EnsemblBacteria" id="AAK23873">
    <property type="protein sequence ID" value="AAK23873"/>
    <property type="gene ID" value="CC_1898"/>
</dbReference>
<dbReference type="KEGG" id="ccr:CC_1898"/>
<dbReference type="PATRIC" id="fig|190650.5.peg.1914"/>
<dbReference type="eggNOG" id="COG0547">
    <property type="taxonomic scope" value="Bacteria"/>
</dbReference>
<dbReference type="HOGENOM" id="CLU_034315_2_1_5"/>
<dbReference type="BioCyc" id="CAULO:CC1898-MONOMER"/>
<dbReference type="UniPathway" id="UPA00035">
    <property type="reaction ID" value="UER00041"/>
</dbReference>
<dbReference type="Proteomes" id="UP000001816">
    <property type="component" value="Chromosome"/>
</dbReference>
<dbReference type="GO" id="GO:0005829">
    <property type="term" value="C:cytosol"/>
    <property type="evidence" value="ECO:0007669"/>
    <property type="project" value="TreeGrafter"/>
</dbReference>
<dbReference type="GO" id="GO:0004048">
    <property type="term" value="F:anthranilate phosphoribosyltransferase activity"/>
    <property type="evidence" value="ECO:0007669"/>
    <property type="project" value="UniProtKB-UniRule"/>
</dbReference>
<dbReference type="GO" id="GO:0000287">
    <property type="term" value="F:magnesium ion binding"/>
    <property type="evidence" value="ECO:0007669"/>
    <property type="project" value="UniProtKB-UniRule"/>
</dbReference>
<dbReference type="GO" id="GO:0000162">
    <property type="term" value="P:L-tryptophan biosynthetic process"/>
    <property type="evidence" value="ECO:0007669"/>
    <property type="project" value="UniProtKB-UniRule"/>
</dbReference>
<dbReference type="FunFam" id="3.40.1030.10:FF:000002">
    <property type="entry name" value="Anthranilate phosphoribosyltransferase"/>
    <property type="match status" value="1"/>
</dbReference>
<dbReference type="Gene3D" id="3.40.1030.10">
    <property type="entry name" value="Nucleoside phosphorylase/phosphoribosyltransferase catalytic domain"/>
    <property type="match status" value="1"/>
</dbReference>
<dbReference type="Gene3D" id="1.20.970.10">
    <property type="entry name" value="Transferase, Pyrimidine Nucleoside Phosphorylase, Chain C"/>
    <property type="match status" value="1"/>
</dbReference>
<dbReference type="HAMAP" id="MF_00211">
    <property type="entry name" value="TrpD"/>
    <property type="match status" value="1"/>
</dbReference>
<dbReference type="InterPro" id="IPR005940">
    <property type="entry name" value="Anthranilate_Pribosyl_Tfrase"/>
</dbReference>
<dbReference type="InterPro" id="IPR000312">
    <property type="entry name" value="Glycosyl_Trfase_fam3"/>
</dbReference>
<dbReference type="InterPro" id="IPR017459">
    <property type="entry name" value="Glycosyl_Trfase_fam3_N_dom"/>
</dbReference>
<dbReference type="InterPro" id="IPR036320">
    <property type="entry name" value="Glycosyl_Trfase_fam3_N_dom_sf"/>
</dbReference>
<dbReference type="InterPro" id="IPR035902">
    <property type="entry name" value="Nuc_phospho_transferase"/>
</dbReference>
<dbReference type="NCBIfam" id="TIGR01245">
    <property type="entry name" value="trpD"/>
    <property type="match status" value="1"/>
</dbReference>
<dbReference type="PANTHER" id="PTHR43285">
    <property type="entry name" value="ANTHRANILATE PHOSPHORIBOSYLTRANSFERASE"/>
    <property type="match status" value="1"/>
</dbReference>
<dbReference type="PANTHER" id="PTHR43285:SF2">
    <property type="entry name" value="ANTHRANILATE PHOSPHORIBOSYLTRANSFERASE"/>
    <property type="match status" value="1"/>
</dbReference>
<dbReference type="Pfam" id="PF02885">
    <property type="entry name" value="Glycos_trans_3N"/>
    <property type="match status" value="1"/>
</dbReference>
<dbReference type="Pfam" id="PF00591">
    <property type="entry name" value="Glycos_transf_3"/>
    <property type="match status" value="1"/>
</dbReference>
<dbReference type="SUPFAM" id="SSF52418">
    <property type="entry name" value="Nucleoside phosphorylase/phosphoribosyltransferase catalytic domain"/>
    <property type="match status" value="1"/>
</dbReference>
<dbReference type="SUPFAM" id="SSF47648">
    <property type="entry name" value="Nucleoside phosphorylase/phosphoribosyltransferase N-terminal domain"/>
    <property type="match status" value="1"/>
</dbReference>
<evidence type="ECO:0000255" key="1">
    <source>
        <dbReference type="HAMAP-Rule" id="MF_00211"/>
    </source>
</evidence>
<gene>
    <name evidence="1" type="primary">trpD</name>
    <name type="ordered locus">CC_1898</name>
</gene>
<organism>
    <name type="scientific">Caulobacter vibrioides (strain ATCC 19089 / CIP 103742 / CB 15)</name>
    <name type="common">Caulobacter crescentus</name>
    <dbReference type="NCBI Taxonomy" id="190650"/>
    <lineage>
        <taxon>Bacteria</taxon>
        <taxon>Pseudomonadati</taxon>
        <taxon>Pseudomonadota</taxon>
        <taxon>Alphaproteobacteria</taxon>
        <taxon>Caulobacterales</taxon>
        <taxon>Caulobacteraceae</taxon>
        <taxon>Caulobacter</taxon>
    </lineage>
</organism>
<comment type="function">
    <text evidence="1">Catalyzes the transfer of the phosphoribosyl group of 5-phosphorylribose-1-pyrophosphate (PRPP) to anthranilate to yield N-(5'-phosphoribosyl)-anthranilate (PRA).</text>
</comment>
<comment type="catalytic activity">
    <reaction evidence="1">
        <text>N-(5-phospho-beta-D-ribosyl)anthranilate + diphosphate = 5-phospho-alpha-D-ribose 1-diphosphate + anthranilate</text>
        <dbReference type="Rhea" id="RHEA:11768"/>
        <dbReference type="ChEBI" id="CHEBI:16567"/>
        <dbReference type="ChEBI" id="CHEBI:18277"/>
        <dbReference type="ChEBI" id="CHEBI:33019"/>
        <dbReference type="ChEBI" id="CHEBI:58017"/>
        <dbReference type="EC" id="2.4.2.18"/>
    </reaction>
</comment>
<comment type="cofactor">
    <cofactor evidence="1">
        <name>Mg(2+)</name>
        <dbReference type="ChEBI" id="CHEBI:18420"/>
    </cofactor>
    <text evidence="1">Binds 2 magnesium ions per monomer.</text>
</comment>
<comment type="pathway">
    <text evidence="1">Amino-acid biosynthesis; L-tryptophan biosynthesis; L-tryptophan from chorismate: step 2/5.</text>
</comment>
<comment type="subunit">
    <text evidence="1">Homodimer.</text>
</comment>
<comment type="similarity">
    <text evidence="1">Belongs to the anthranilate phosphoribosyltransferase family.</text>
</comment>
<accession>Q9A728</accession>
<proteinExistence type="inferred from homology"/>
<protein>
    <recommendedName>
        <fullName evidence="1">Anthranilate phosphoribosyltransferase</fullName>
        <ecNumber evidence="1">2.4.2.18</ecNumber>
    </recommendedName>
</protein>